<sequence>MRVSSLTVGGYGKEVSWQAVQRASLIRIINPALPHILHDRPALARLHWAAEVTGIGLAASIKPQLTDIMIRKTACSAVALLVLIGATPAFATNGMNLEGYGAKSMAMGGTGSAYDTGNSAVMNNPATLGFMKEGTSEIGFGIRGLHPDISLDNNGITDKSDATVLHALDVLHAPRRTDHLGRRMLAQGAWAPTTATTRRCSLR</sequence>
<accession>Q08263</accession>
<feature type="chain" id="PRO_0000066408" description="Uncharacterized protein in phosphoenolpyruvate carboxykinase gene 5'region">
    <location>
        <begin position="1"/>
        <end position="203" status="greater than"/>
    </location>
</feature>
<feature type="non-terminal residue">
    <location>
        <position position="203"/>
    </location>
</feature>
<dbReference type="EMBL" id="S56812">
    <property type="protein sequence ID" value="AAB25777.1"/>
    <property type="molecule type" value="Genomic_DNA"/>
</dbReference>
<dbReference type="Gene3D" id="2.40.160.60">
    <property type="entry name" value="Outer membrane protein transport protein (OMPP1/FadL/TodX)"/>
    <property type="match status" value="1"/>
</dbReference>
<dbReference type="SUPFAM" id="SSF56935">
    <property type="entry name" value="Porins"/>
    <property type="match status" value="1"/>
</dbReference>
<reference key="1">
    <citation type="journal article" date="1993" name="Biochim. Biophys. Acta">
        <title>The atp2 operon of the green bacterium Chlorobium limicola.</title>
        <authorList>
            <person name="Xie D.L."/>
            <person name="Lill H."/>
            <person name="Hauska G."/>
            <person name="Maeda M."/>
            <person name="Futai M."/>
            <person name="Nelson N."/>
        </authorList>
    </citation>
    <scope>NUCLEOTIDE SEQUENCE [GENOMIC DNA]</scope>
</reference>
<protein>
    <recommendedName>
        <fullName>Uncharacterized protein in phosphoenolpyruvate carboxykinase gene 5'region</fullName>
    </recommendedName>
</protein>
<proteinExistence type="predicted"/>
<organism>
    <name type="scientific">Chlorobium limicola</name>
    <dbReference type="NCBI Taxonomy" id="1092"/>
    <lineage>
        <taxon>Bacteria</taxon>
        <taxon>Pseudomonadati</taxon>
        <taxon>Chlorobiota</taxon>
        <taxon>Chlorobiia</taxon>
        <taxon>Chlorobiales</taxon>
        <taxon>Chlorobiaceae</taxon>
        <taxon>Chlorobium/Pelodictyon group</taxon>
        <taxon>Chlorobium</taxon>
    </lineage>
</organism>
<name>YPPC_CHLLI</name>